<reference key="1">
    <citation type="submission" date="2009-05" db="EMBL/GenBank/DDBJ databases">
        <title>Complete sequence of Tolumonas auensis DSM 9187.</title>
        <authorList>
            <consortium name="US DOE Joint Genome Institute"/>
            <person name="Lucas S."/>
            <person name="Copeland A."/>
            <person name="Lapidus A."/>
            <person name="Glavina del Rio T."/>
            <person name="Tice H."/>
            <person name="Bruce D."/>
            <person name="Goodwin L."/>
            <person name="Pitluck S."/>
            <person name="Chertkov O."/>
            <person name="Brettin T."/>
            <person name="Detter J.C."/>
            <person name="Han C."/>
            <person name="Larimer F."/>
            <person name="Land M."/>
            <person name="Hauser L."/>
            <person name="Kyrpides N."/>
            <person name="Mikhailova N."/>
            <person name="Spring S."/>
            <person name="Beller H."/>
        </authorList>
    </citation>
    <scope>NUCLEOTIDE SEQUENCE [LARGE SCALE GENOMIC DNA]</scope>
    <source>
        <strain>DSM 9187 / NBRC 110442 / TA 4</strain>
    </source>
</reference>
<sequence length="675" mass="75494">MSSASRNILVTCALPYANGSIHLGHMLEHVQADIWVRFQRMRGHNIHFICADDAHGTPIMLKAQQLGITPEEMIAAVSQEHQTDFAGFKISFDNYHSTHSDENRYFSELIYTKLKDNGFIKSKTISQLYDPEKNMFLPDRFVKGTCPKCKAVDQYGDNCEVCGATYSPTELINPKSAVSGATPVMKETEHFFFDLPQFADMLQAWTTSGALQEEISNKLNEWFTSGLHQWDITRDAPYFGFEIPGAPGKFFYVWLDAPIGYMGSFKNLCDKRGDIDFDAFWSQNSDAELYHFIGKDIVYFHSLFWPAMLDGAGFRKPSNIFVHGYVTVNGAKMSKSRGTFIKASTYLQHLDPECLRYYYAAKLNNRIDDLDLNLDDFVARVNSDVVNKLVNLASRTAGFITKRLDGKLADTLSEPALYATFTSASERIAEAYENREFSRAIREIMALADEANRYVDEKAPWVIAKQEGQEAELSAVCSTTLNLFRVLMTYLKPVMPELAARAEAFLNVTLNWNDIEQPLLAHNVAPFKALFNRIDPVKVTAMVDASKEEQQTAAPKATGPLADEPIAPEITYDDFAKLDLRIALIKKAEAVPEADKLLRLQLDLGGEVRQVFAGIKSAYSPEQLEGKLTVMVANLAPRKMRFGMSEGMVLAAGPGGKDLFILEPNAGAKPGMRVK</sequence>
<accession>C4LEX5</accession>
<protein>
    <recommendedName>
        <fullName evidence="1">Methionine--tRNA ligase</fullName>
        <ecNumber evidence="1">6.1.1.10</ecNumber>
    </recommendedName>
    <alternativeName>
        <fullName evidence="1">Methionyl-tRNA synthetase</fullName>
        <shortName evidence="1">MetRS</shortName>
    </alternativeName>
</protein>
<dbReference type="EC" id="6.1.1.10" evidence="1"/>
<dbReference type="EMBL" id="CP001616">
    <property type="protein sequence ID" value="ACQ93142.1"/>
    <property type="molecule type" value="Genomic_DNA"/>
</dbReference>
<dbReference type="RefSeq" id="WP_015878614.1">
    <property type="nucleotide sequence ID" value="NC_012691.1"/>
</dbReference>
<dbReference type="SMR" id="C4LEX5"/>
<dbReference type="STRING" id="595494.Tola_1531"/>
<dbReference type="KEGG" id="tau:Tola_1531"/>
<dbReference type="eggNOG" id="COG0073">
    <property type="taxonomic scope" value="Bacteria"/>
</dbReference>
<dbReference type="eggNOG" id="COG0143">
    <property type="taxonomic scope" value="Bacteria"/>
</dbReference>
<dbReference type="HOGENOM" id="CLU_009710_7_0_6"/>
<dbReference type="OrthoDB" id="9810191at2"/>
<dbReference type="Proteomes" id="UP000009073">
    <property type="component" value="Chromosome"/>
</dbReference>
<dbReference type="GO" id="GO:0005829">
    <property type="term" value="C:cytosol"/>
    <property type="evidence" value="ECO:0007669"/>
    <property type="project" value="TreeGrafter"/>
</dbReference>
<dbReference type="GO" id="GO:0005524">
    <property type="term" value="F:ATP binding"/>
    <property type="evidence" value="ECO:0007669"/>
    <property type="project" value="UniProtKB-UniRule"/>
</dbReference>
<dbReference type="GO" id="GO:0046872">
    <property type="term" value="F:metal ion binding"/>
    <property type="evidence" value="ECO:0007669"/>
    <property type="project" value="UniProtKB-KW"/>
</dbReference>
<dbReference type="GO" id="GO:0004825">
    <property type="term" value="F:methionine-tRNA ligase activity"/>
    <property type="evidence" value="ECO:0007669"/>
    <property type="project" value="UniProtKB-UniRule"/>
</dbReference>
<dbReference type="GO" id="GO:0000049">
    <property type="term" value="F:tRNA binding"/>
    <property type="evidence" value="ECO:0007669"/>
    <property type="project" value="UniProtKB-KW"/>
</dbReference>
<dbReference type="GO" id="GO:0006431">
    <property type="term" value="P:methionyl-tRNA aminoacylation"/>
    <property type="evidence" value="ECO:0007669"/>
    <property type="project" value="UniProtKB-UniRule"/>
</dbReference>
<dbReference type="CDD" id="cd07957">
    <property type="entry name" value="Anticodon_Ia_Met"/>
    <property type="match status" value="1"/>
</dbReference>
<dbReference type="CDD" id="cd00814">
    <property type="entry name" value="MetRS_core"/>
    <property type="match status" value="1"/>
</dbReference>
<dbReference type="CDD" id="cd02800">
    <property type="entry name" value="tRNA_bind_EcMetRS_like"/>
    <property type="match status" value="1"/>
</dbReference>
<dbReference type="FunFam" id="1.10.730.10:FF:000005">
    <property type="entry name" value="Methionine--tRNA ligase"/>
    <property type="match status" value="1"/>
</dbReference>
<dbReference type="FunFam" id="2.20.28.20:FF:000001">
    <property type="entry name" value="Methionine--tRNA ligase"/>
    <property type="match status" value="1"/>
</dbReference>
<dbReference type="FunFam" id="2.40.50.140:FF:000042">
    <property type="entry name" value="Methionine--tRNA ligase"/>
    <property type="match status" value="1"/>
</dbReference>
<dbReference type="Gene3D" id="3.40.50.620">
    <property type="entry name" value="HUPs"/>
    <property type="match status" value="1"/>
</dbReference>
<dbReference type="Gene3D" id="1.10.730.10">
    <property type="entry name" value="Isoleucyl-tRNA Synthetase, Domain 1"/>
    <property type="match status" value="1"/>
</dbReference>
<dbReference type="Gene3D" id="2.20.28.20">
    <property type="entry name" value="Methionyl-tRNA synthetase, Zn-domain"/>
    <property type="match status" value="1"/>
</dbReference>
<dbReference type="Gene3D" id="2.40.50.140">
    <property type="entry name" value="Nucleic acid-binding proteins"/>
    <property type="match status" value="1"/>
</dbReference>
<dbReference type="HAMAP" id="MF_00098">
    <property type="entry name" value="Met_tRNA_synth_type1"/>
    <property type="match status" value="1"/>
</dbReference>
<dbReference type="InterPro" id="IPR001412">
    <property type="entry name" value="aa-tRNA-synth_I_CS"/>
</dbReference>
<dbReference type="InterPro" id="IPR041872">
    <property type="entry name" value="Anticodon_Met"/>
</dbReference>
<dbReference type="InterPro" id="IPR004495">
    <property type="entry name" value="Met-tRNA-synth_bsu_C"/>
</dbReference>
<dbReference type="InterPro" id="IPR023458">
    <property type="entry name" value="Met-tRNA_ligase_1"/>
</dbReference>
<dbReference type="InterPro" id="IPR014758">
    <property type="entry name" value="Met-tRNA_synth"/>
</dbReference>
<dbReference type="InterPro" id="IPR015413">
    <property type="entry name" value="Methionyl/Leucyl_tRNA_Synth"/>
</dbReference>
<dbReference type="InterPro" id="IPR033911">
    <property type="entry name" value="MetRS_core"/>
</dbReference>
<dbReference type="InterPro" id="IPR029038">
    <property type="entry name" value="MetRS_Zn"/>
</dbReference>
<dbReference type="InterPro" id="IPR012340">
    <property type="entry name" value="NA-bd_OB-fold"/>
</dbReference>
<dbReference type="InterPro" id="IPR014729">
    <property type="entry name" value="Rossmann-like_a/b/a_fold"/>
</dbReference>
<dbReference type="InterPro" id="IPR002547">
    <property type="entry name" value="tRNA-bd_dom"/>
</dbReference>
<dbReference type="InterPro" id="IPR009080">
    <property type="entry name" value="tRNAsynth_Ia_anticodon-bd"/>
</dbReference>
<dbReference type="NCBIfam" id="TIGR00398">
    <property type="entry name" value="metG"/>
    <property type="match status" value="1"/>
</dbReference>
<dbReference type="NCBIfam" id="TIGR00399">
    <property type="entry name" value="metG_C_term"/>
    <property type="match status" value="1"/>
</dbReference>
<dbReference type="NCBIfam" id="NF001100">
    <property type="entry name" value="PRK00133.1"/>
    <property type="match status" value="1"/>
</dbReference>
<dbReference type="PANTHER" id="PTHR45765">
    <property type="entry name" value="METHIONINE--TRNA LIGASE"/>
    <property type="match status" value="1"/>
</dbReference>
<dbReference type="PANTHER" id="PTHR45765:SF1">
    <property type="entry name" value="METHIONINE--TRNA LIGASE, CYTOPLASMIC"/>
    <property type="match status" value="1"/>
</dbReference>
<dbReference type="Pfam" id="PF19303">
    <property type="entry name" value="Anticodon_3"/>
    <property type="match status" value="1"/>
</dbReference>
<dbReference type="Pfam" id="PF09334">
    <property type="entry name" value="tRNA-synt_1g"/>
    <property type="match status" value="1"/>
</dbReference>
<dbReference type="Pfam" id="PF01588">
    <property type="entry name" value="tRNA_bind"/>
    <property type="match status" value="1"/>
</dbReference>
<dbReference type="PRINTS" id="PR01041">
    <property type="entry name" value="TRNASYNTHMET"/>
</dbReference>
<dbReference type="SUPFAM" id="SSF47323">
    <property type="entry name" value="Anticodon-binding domain of a subclass of class I aminoacyl-tRNA synthetases"/>
    <property type="match status" value="1"/>
</dbReference>
<dbReference type="SUPFAM" id="SSF57770">
    <property type="entry name" value="Methionyl-tRNA synthetase (MetRS), Zn-domain"/>
    <property type="match status" value="1"/>
</dbReference>
<dbReference type="SUPFAM" id="SSF50249">
    <property type="entry name" value="Nucleic acid-binding proteins"/>
    <property type="match status" value="1"/>
</dbReference>
<dbReference type="SUPFAM" id="SSF52374">
    <property type="entry name" value="Nucleotidylyl transferase"/>
    <property type="match status" value="1"/>
</dbReference>
<dbReference type="PROSITE" id="PS00178">
    <property type="entry name" value="AA_TRNA_LIGASE_I"/>
    <property type="match status" value="1"/>
</dbReference>
<dbReference type="PROSITE" id="PS50886">
    <property type="entry name" value="TRBD"/>
    <property type="match status" value="1"/>
</dbReference>
<keyword id="KW-0030">Aminoacyl-tRNA synthetase</keyword>
<keyword id="KW-0067">ATP-binding</keyword>
<keyword id="KW-0963">Cytoplasm</keyword>
<keyword id="KW-0436">Ligase</keyword>
<keyword id="KW-0479">Metal-binding</keyword>
<keyword id="KW-0547">Nucleotide-binding</keyword>
<keyword id="KW-0648">Protein biosynthesis</keyword>
<keyword id="KW-1185">Reference proteome</keyword>
<keyword id="KW-0694">RNA-binding</keyword>
<keyword id="KW-0820">tRNA-binding</keyword>
<keyword id="KW-0862">Zinc</keyword>
<organism>
    <name type="scientific">Tolumonas auensis (strain DSM 9187 / NBRC 110442 / TA 4)</name>
    <dbReference type="NCBI Taxonomy" id="595494"/>
    <lineage>
        <taxon>Bacteria</taxon>
        <taxon>Pseudomonadati</taxon>
        <taxon>Pseudomonadota</taxon>
        <taxon>Gammaproteobacteria</taxon>
        <taxon>Aeromonadales</taxon>
        <taxon>Aeromonadaceae</taxon>
        <taxon>Tolumonas</taxon>
    </lineage>
</organism>
<name>SYM_TOLAT</name>
<proteinExistence type="inferred from homology"/>
<comment type="function">
    <text evidence="1">Is required not only for elongation of protein synthesis but also for the initiation of all mRNA translation through initiator tRNA(fMet) aminoacylation.</text>
</comment>
<comment type="catalytic activity">
    <reaction evidence="1">
        <text>tRNA(Met) + L-methionine + ATP = L-methionyl-tRNA(Met) + AMP + diphosphate</text>
        <dbReference type="Rhea" id="RHEA:13481"/>
        <dbReference type="Rhea" id="RHEA-COMP:9667"/>
        <dbReference type="Rhea" id="RHEA-COMP:9698"/>
        <dbReference type="ChEBI" id="CHEBI:30616"/>
        <dbReference type="ChEBI" id="CHEBI:33019"/>
        <dbReference type="ChEBI" id="CHEBI:57844"/>
        <dbReference type="ChEBI" id="CHEBI:78442"/>
        <dbReference type="ChEBI" id="CHEBI:78530"/>
        <dbReference type="ChEBI" id="CHEBI:456215"/>
        <dbReference type="EC" id="6.1.1.10"/>
    </reaction>
</comment>
<comment type="cofactor">
    <cofactor evidence="1">
        <name>Zn(2+)</name>
        <dbReference type="ChEBI" id="CHEBI:29105"/>
    </cofactor>
    <text evidence="1">Binds 1 zinc ion per subunit.</text>
</comment>
<comment type="subunit">
    <text evidence="1">Homodimer.</text>
</comment>
<comment type="subcellular location">
    <subcellularLocation>
        <location evidence="1">Cytoplasm</location>
    </subcellularLocation>
</comment>
<comment type="similarity">
    <text evidence="1">Belongs to the class-I aminoacyl-tRNA synthetase family. MetG type 1 subfamily.</text>
</comment>
<evidence type="ECO:0000255" key="1">
    <source>
        <dbReference type="HAMAP-Rule" id="MF_00098"/>
    </source>
</evidence>
<gene>
    <name evidence="1" type="primary">metG</name>
    <name type="ordered locus">Tola_1531</name>
</gene>
<feature type="chain" id="PRO_1000202761" description="Methionine--tRNA ligase">
    <location>
        <begin position="1"/>
        <end position="675"/>
    </location>
</feature>
<feature type="domain" description="tRNA-binding" evidence="1">
    <location>
        <begin position="574"/>
        <end position="675"/>
    </location>
</feature>
<feature type="short sequence motif" description="'HIGH' region">
    <location>
        <begin position="15"/>
        <end position="25"/>
    </location>
</feature>
<feature type="short sequence motif" description="'KMSKS' region">
    <location>
        <begin position="332"/>
        <end position="336"/>
    </location>
</feature>
<feature type="binding site" evidence="1">
    <location>
        <position position="146"/>
    </location>
    <ligand>
        <name>Zn(2+)</name>
        <dbReference type="ChEBI" id="CHEBI:29105"/>
    </ligand>
</feature>
<feature type="binding site" evidence="1">
    <location>
        <position position="149"/>
    </location>
    <ligand>
        <name>Zn(2+)</name>
        <dbReference type="ChEBI" id="CHEBI:29105"/>
    </ligand>
</feature>
<feature type="binding site" evidence="1">
    <location>
        <position position="159"/>
    </location>
    <ligand>
        <name>Zn(2+)</name>
        <dbReference type="ChEBI" id="CHEBI:29105"/>
    </ligand>
</feature>
<feature type="binding site" evidence="1">
    <location>
        <position position="162"/>
    </location>
    <ligand>
        <name>Zn(2+)</name>
        <dbReference type="ChEBI" id="CHEBI:29105"/>
    </ligand>
</feature>
<feature type="binding site" evidence="1">
    <location>
        <position position="335"/>
    </location>
    <ligand>
        <name>ATP</name>
        <dbReference type="ChEBI" id="CHEBI:30616"/>
    </ligand>
</feature>